<sequence>MSQKFDVIVIGAGPGGYVAAIKSAQLGLKTALIEKYKGKEGKTALGGTCLNVGCIPSKALLDSSYKFHEAHESFKLHGISTGEVAIDVPTMIARKDQIVRNLTGGVASLIKANGVTLFEGHGKLLAGKKVEVTAADGSSQVLDTENVILASGSKPVEIPPAPVDQDVIVDSTGALDFQNVPGKLGVIGAGVIGLELGSVWARLGAEVTVLEAMDKFLPAVDEQVAKEAQKILTKQGLKILLGARVTGTEVKNKQVTVKFVDAEGEKSQAFDKLIVAVGRRPVTTDLLAADSGVTLDERGFIYVDDYCATSVPGVYAIGDVVRGAMLAHKASEEGVVVAERIAGHKAQMNYDLIPAVIYTHPEIAGVGKTEQALKAEGVAINVGVFPFAASGRAMAANDTAGFVKVIADAKTDRVLGVHVIGPSAAELVQQGAIAMEFGTSAEDLGMMVFAHPALSEALHEAALAVSGHAIHVANRKK</sequence>
<reference key="1">
    <citation type="journal article" date="1988" name="Eur. J. Biochem.">
        <title>Lipoamide dehydrogenase from Azotobacter vinelandii. Molecular cloning, organization and sequence analysis of the gene.</title>
        <authorList>
            <person name="Westphal A.H."/>
            <person name="de Kok A."/>
        </authorList>
    </citation>
    <scope>NUCLEOTIDE SEQUENCE [GENOMIC DNA]</scope>
</reference>
<reference key="2">
    <citation type="journal article" date="1990" name="Eur. J. Biochem.">
        <title>The 2-oxoglutarate dehydrogenase complex from Azotobacter vinelandii. 2. Molecular cloning and sequence analysis of the gene encoding the succinyltransferase component.</title>
        <authorList>
            <person name="Westphal A.H."/>
            <person name="de Kok A."/>
        </authorList>
    </citation>
    <scope>NUCLEOTIDE SEQUENCE [GENOMIC DNA] OF 1-21</scope>
    <scope>DISULFIDE BOND</scope>
</reference>
<reference key="3">
    <citation type="journal article" date="1991" name="J. Mol. Biol.">
        <title>Refined crystal structure of lipoamide dehydrogenase from Azotobacter vinelandii at 2.2-A resolution. A comparison with the structure of glutathione reductase.</title>
        <authorList>
            <person name="Mattevi A."/>
            <person name="Schierbeek A.J."/>
            <person name="Hol W.G.J."/>
        </authorList>
    </citation>
    <scope>X-RAY CRYSTALLOGRAPHY (2.2 ANGSTROMS) IN COMPLEX WITH FAD</scope>
</reference>
<name>DLDH_AZOVI</name>
<dbReference type="EC" id="1.8.1.4"/>
<dbReference type="EMBL" id="M37307">
    <property type="protein sequence ID" value="AAA22139.1"/>
    <property type="molecule type" value="Genomic_DNA"/>
</dbReference>
<dbReference type="EMBL" id="X52432">
    <property type="protein sequence ID" value="CAA36679.1"/>
    <property type="molecule type" value="Genomic_DNA"/>
</dbReference>
<dbReference type="PIR" id="S00360">
    <property type="entry name" value="DEAVHL"/>
</dbReference>
<dbReference type="RefSeq" id="WP_012701528.1">
    <property type="nucleotide sequence ID" value="NZ_FPKM01000019.1"/>
</dbReference>
<dbReference type="PDB" id="3LAD">
    <property type="method" value="X-ray"/>
    <property type="resolution" value="2.20 A"/>
    <property type="chains" value="A/B=2-477"/>
</dbReference>
<dbReference type="PDBsum" id="3LAD"/>
<dbReference type="SMR" id="P18925"/>
<dbReference type="DrugBank" id="DB03147">
    <property type="generic name" value="Flavin adenine dinucleotide"/>
</dbReference>
<dbReference type="GeneID" id="88186073"/>
<dbReference type="OMA" id="CAQLGMK"/>
<dbReference type="SABIO-RK" id="P18925"/>
<dbReference type="EvolutionaryTrace" id="P18925"/>
<dbReference type="GO" id="GO:0005737">
    <property type="term" value="C:cytoplasm"/>
    <property type="evidence" value="ECO:0007669"/>
    <property type="project" value="UniProtKB-SubCell"/>
</dbReference>
<dbReference type="GO" id="GO:0004148">
    <property type="term" value="F:dihydrolipoyl dehydrogenase (NADH) activity"/>
    <property type="evidence" value="ECO:0007669"/>
    <property type="project" value="UniProtKB-EC"/>
</dbReference>
<dbReference type="GO" id="GO:0050660">
    <property type="term" value="F:flavin adenine dinucleotide binding"/>
    <property type="evidence" value="ECO:0007669"/>
    <property type="project" value="InterPro"/>
</dbReference>
<dbReference type="GO" id="GO:0006103">
    <property type="term" value="P:2-oxoglutarate metabolic process"/>
    <property type="evidence" value="ECO:0007669"/>
    <property type="project" value="TreeGrafter"/>
</dbReference>
<dbReference type="FunFam" id="3.30.390.30:FF:000001">
    <property type="entry name" value="Dihydrolipoyl dehydrogenase"/>
    <property type="match status" value="1"/>
</dbReference>
<dbReference type="FunFam" id="3.50.50.60:FF:000001">
    <property type="entry name" value="Dihydrolipoyl dehydrogenase, mitochondrial"/>
    <property type="match status" value="1"/>
</dbReference>
<dbReference type="Gene3D" id="3.30.390.30">
    <property type="match status" value="1"/>
</dbReference>
<dbReference type="Gene3D" id="3.50.50.60">
    <property type="entry name" value="FAD/NAD(P)-binding domain"/>
    <property type="match status" value="2"/>
</dbReference>
<dbReference type="InterPro" id="IPR050151">
    <property type="entry name" value="Class-I_Pyr_Nuc-Dis_Oxidored"/>
</dbReference>
<dbReference type="InterPro" id="IPR036188">
    <property type="entry name" value="FAD/NAD-bd_sf"/>
</dbReference>
<dbReference type="InterPro" id="IPR023753">
    <property type="entry name" value="FAD/NAD-binding_dom"/>
</dbReference>
<dbReference type="InterPro" id="IPR016156">
    <property type="entry name" value="FAD/NAD-linked_Rdtase_dimer_sf"/>
</dbReference>
<dbReference type="InterPro" id="IPR006258">
    <property type="entry name" value="Lipoamide_DH"/>
</dbReference>
<dbReference type="InterPro" id="IPR001100">
    <property type="entry name" value="Pyr_nuc-diS_OxRdtase"/>
</dbReference>
<dbReference type="InterPro" id="IPR004099">
    <property type="entry name" value="Pyr_nucl-diS_OxRdtase_dimer"/>
</dbReference>
<dbReference type="InterPro" id="IPR012999">
    <property type="entry name" value="Pyr_OxRdtase_I_AS"/>
</dbReference>
<dbReference type="NCBIfam" id="TIGR01350">
    <property type="entry name" value="lipoamide_DH"/>
    <property type="match status" value="1"/>
</dbReference>
<dbReference type="PANTHER" id="PTHR22912:SF224">
    <property type="entry name" value="DIHYDROLIPOYL DEHYDROGENASE"/>
    <property type="match status" value="1"/>
</dbReference>
<dbReference type="PANTHER" id="PTHR22912">
    <property type="entry name" value="DISULFIDE OXIDOREDUCTASE"/>
    <property type="match status" value="1"/>
</dbReference>
<dbReference type="Pfam" id="PF07992">
    <property type="entry name" value="Pyr_redox_2"/>
    <property type="match status" value="1"/>
</dbReference>
<dbReference type="Pfam" id="PF02852">
    <property type="entry name" value="Pyr_redox_dim"/>
    <property type="match status" value="1"/>
</dbReference>
<dbReference type="PIRSF" id="PIRSF000350">
    <property type="entry name" value="Mercury_reductase_MerA"/>
    <property type="match status" value="1"/>
</dbReference>
<dbReference type="PRINTS" id="PR00368">
    <property type="entry name" value="FADPNR"/>
</dbReference>
<dbReference type="PRINTS" id="PR00411">
    <property type="entry name" value="PNDRDTASEI"/>
</dbReference>
<dbReference type="SUPFAM" id="SSF51905">
    <property type="entry name" value="FAD/NAD(P)-binding domain"/>
    <property type="match status" value="1"/>
</dbReference>
<dbReference type="SUPFAM" id="SSF55424">
    <property type="entry name" value="FAD/NAD-linked reductases, dimerisation (C-terminal) domain"/>
    <property type="match status" value="1"/>
</dbReference>
<dbReference type="PROSITE" id="PS00076">
    <property type="entry name" value="PYRIDINE_REDOX_1"/>
    <property type="match status" value="1"/>
</dbReference>
<protein>
    <recommendedName>
        <fullName>Dihydrolipoyl dehydrogenase</fullName>
        <ecNumber>1.8.1.4</ecNumber>
    </recommendedName>
    <alternativeName>
        <fullName>Dihydrolipoamide dehydrogenase</fullName>
    </alternativeName>
    <alternativeName>
        <fullName>E3 component of pyruvate complex</fullName>
    </alternativeName>
</protein>
<keyword id="KW-0002">3D-structure</keyword>
<keyword id="KW-0963">Cytoplasm</keyword>
<keyword id="KW-1015">Disulfide bond</keyword>
<keyword id="KW-0274">FAD</keyword>
<keyword id="KW-0285">Flavoprotein</keyword>
<keyword id="KW-0520">NAD</keyword>
<keyword id="KW-0560">Oxidoreductase</keyword>
<keyword id="KW-0676">Redox-active center</keyword>
<accession>P18925</accession>
<comment type="function">
    <text>The pyruvate dehydrogenase complex catalyzes the overall conversion of pyruvate to acetyl-CoA and CO(2). It contains multiple copies of three enzymatic components: pyruvate dehydrogenase (E1), dihydrolipoamide acetyltransferase (E2) and lipoamide dehydrogenase (E3).</text>
</comment>
<comment type="catalytic activity">
    <reaction>
        <text>N(6)-[(R)-dihydrolipoyl]-L-lysyl-[protein] + NAD(+) = N(6)-[(R)-lipoyl]-L-lysyl-[protein] + NADH + H(+)</text>
        <dbReference type="Rhea" id="RHEA:15045"/>
        <dbReference type="Rhea" id="RHEA-COMP:10474"/>
        <dbReference type="Rhea" id="RHEA-COMP:10475"/>
        <dbReference type="ChEBI" id="CHEBI:15378"/>
        <dbReference type="ChEBI" id="CHEBI:57540"/>
        <dbReference type="ChEBI" id="CHEBI:57945"/>
        <dbReference type="ChEBI" id="CHEBI:83099"/>
        <dbReference type="ChEBI" id="CHEBI:83100"/>
        <dbReference type="EC" id="1.8.1.4"/>
    </reaction>
</comment>
<comment type="cofactor">
    <cofactor>
        <name>FAD</name>
        <dbReference type="ChEBI" id="CHEBI:57692"/>
    </cofactor>
    <text>Binds 1 FAD per subunit.</text>
</comment>
<comment type="subunit">
    <text evidence="2">Homodimer.</text>
</comment>
<comment type="subcellular location">
    <subcellularLocation>
        <location>Cytoplasm</location>
    </subcellularLocation>
</comment>
<comment type="miscellaneous">
    <text>The active site is a redox-active disulfide bond.</text>
</comment>
<comment type="similarity">
    <text evidence="4">Belongs to the class-I pyridine nucleotide-disulfide oxidoreductase family.</text>
</comment>
<proteinExistence type="evidence at protein level"/>
<feature type="chain" id="PRO_0000068014" description="Dihydrolipoyl dehydrogenase">
    <location>
        <begin position="1"/>
        <end position="477"/>
    </location>
</feature>
<feature type="active site" description="Proton acceptor">
    <location>
        <position position="451"/>
    </location>
</feature>
<feature type="binding site" evidence="2">
    <location>
        <begin position="34"/>
        <end position="49"/>
    </location>
    <ligand>
        <name>FAD</name>
        <dbReference type="ChEBI" id="CHEBI:57692"/>
    </ligand>
</feature>
<feature type="binding site" evidence="2">
    <location>
        <position position="58"/>
    </location>
    <ligand>
        <name>FAD</name>
        <dbReference type="ChEBI" id="CHEBI:57692"/>
    </ligand>
</feature>
<feature type="binding site" evidence="1">
    <location>
        <position position="122"/>
    </location>
    <ligand>
        <name>FAD</name>
        <dbReference type="ChEBI" id="CHEBI:57692"/>
    </ligand>
</feature>
<feature type="binding site" evidence="1">
    <location>
        <begin position="188"/>
        <end position="192"/>
    </location>
    <ligand>
        <name>NAD(+)</name>
        <dbReference type="ChEBI" id="CHEBI:57540"/>
    </ligand>
</feature>
<feature type="binding site" evidence="1">
    <location>
        <position position="211"/>
    </location>
    <ligand>
        <name>NAD(+)</name>
        <dbReference type="ChEBI" id="CHEBI:57540"/>
    </ligand>
</feature>
<feature type="binding site" evidence="1">
    <location>
        <position position="245"/>
    </location>
    <ligand>
        <name>NAD(+)</name>
        <dbReference type="ChEBI" id="CHEBI:57540"/>
    </ligand>
</feature>
<feature type="binding site" evidence="1">
    <location>
        <begin position="276"/>
        <end position="279"/>
    </location>
    <ligand>
        <name>NAD(+)</name>
        <dbReference type="ChEBI" id="CHEBI:57540"/>
    </ligand>
</feature>
<feature type="binding site" evidence="2">
    <location>
        <position position="319"/>
    </location>
    <ligand>
        <name>FAD</name>
        <dbReference type="ChEBI" id="CHEBI:57692"/>
    </ligand>
</feature>
<feature type="binding site" evidence="2">
    <location>
        <position position="327"/>
    </location>
    <ligand>
        <name>FAD</name>
        <dbReference type="ChEBI" id="CHEBI:57692"/>
    </ligand>
</feature>
<feature type="disulfide bond" description="Redox-active" evidence="2 3">
    <location>
        <begin position="49"/>
        <end position="54"/>
    </location>
</feature>
<feature type="strand" evidence="5">
    <location>
        <begin position="6"/>
        <end position="10"/>
    </location>
</feature>
<feature type="helix" evidence="5">
    <location>
        <begin position="14"/>
        <end position="26"/>
    </location>
</feature>
<feature type="strand" evidence="5">
    <location>
        <begin position="30"/>
        <end position="34"/>
    </location>
</feature>
<feature type="strand" evidence="5">
    <location>
        <begin position="41"/>
        <end position="43"/>
    </location>
</feature>
<feature type="helix" evidence="5">
    <location>
        <begin position="47"/>
        <end position="52"/>
    </location>
</feature>
<feature type="helix" evidence="5">
    <location>
        <begin position="54"/>
        <end position="71"/>
    </location>
</feature>
<feature type="helix" evidence="5">
    <location>
        <begin position="75"/>
        <end position="77"/>
    </location>
</feature>
<feature type="helix" evidence="5">
    <location>
        <begin position="88"/>
        <end position="113"/>
    </location>
</feature>
<feature type="strand" evidence="5">
    <location>
        <begin position="116"/>
        <end position="124"/>
    </location>
</feature>
<feature type="strand" evidence="5">
    <location>
        <begin position="130"/>
        <end position="133"/>
    </location>
</feature>
<feature type="strand" evidence="5">
    <location>
        <begin position="139"/>
        <end position="142"/>
    </location>
</feature>
<feature type="strand" evidence="5">
    <location>
        <begin position="147"/>
        <end position="149"/>
    </location>
</feature>
<feature type="strand" evidence="5">
    <location>
        <begin position="153"/>
        <end position="155"/>
    </location>
</feature>
<feature type="strand" evidence="5">
    <location>
        <begin position="165"/>
        <end position="170"/>
    </location>
</feature>
<feature type="helix" evidence="5">
    <location>
        <begin position="171"/>
        <end position="174"/>
    </location>
</feature>
<feature type="strand" evidence="5">
    <location>
        <begin position="182"/>
        <end position="187"/>
    </location>
</feature>
<feature type="helix" evidence="5">
    <location>
        <begin position="191"/>
        <end position="202"/>
    </location>
</feature>
<feature type="strand" evidence="5">
    <location>
        <begin position="206"/>
        <end position="217"/>
    </location>
</feature>
<feature type="helix" evidence="5">
    <location>
        <begin position="222"/>
        <end position="234"/>
    </location>
</feature>
<feature type="strand" evidence="5">
    <location>
        <begin position="237"/>
        <end position="241"/>
    </location>
</feature>
<feature type="strand" evidence="5">
    <location>
        <begin position="244"/>
        <end position="250"/>
    </location>
</feature>
<feature type="strand" evidence="5">
    <location>
        <begin position="255"/>
        <end position="275"/>
    </location>
</feature>
<feature type="strand" evidence="5">
    <location>
        <begin position="279"/>
        <end position="281"/>
    </location>
</feature>
<feature type="strand" evidence="5">
    <location>
        <begin position="314"/>
        <end position="316"/>
    </location>
</feature>
<feature type="helix" evidence="5">
    <location>
        <begin position="318"/>
        <end position="320"/>
    </location>
</feature>
<feature type="strand" evidence="5">
    <location>
        <begin position="321"/>
        <end position="323"/>
    </location>
</feature>
<feature type="helix" evidence="5">
    <location>
        <begin position="327"/>
        <end position="343"/>
    </location>
</feature>
<feature type="strand" evidence="5">
    <location>
        <begin position="355"/>
        <end position="357"/>
    </location>
</feature>
<feature type="strand" evidence="5">
    <location>
        <begin position="359"/>
        <end position="367"/>
    </location>
</feature>
<feature type="helix" evidence="5">
    <location>
        <begin position="370"/>
        <end position="375"/>
    </location>
</feature>
<feature type="strand" evidence="5">
    <location>
        <begin position="380"/>
        <end position="386"/>
    </location>
</feature>
<feature type="helix" evidence="5">
    <location>
        <begin position="387"/>
        <end position="389"/>
    </location>
</feature>
<feature type="helix" evidence="5">
    <location>
        <begin position="391"/>
        <end position="396"/>
    </location>
</feature>
<feature type="strand" evidence="5">
    <location>
        <begin position="402"/>
        <end position="408"/>
    </location>
</feature>
<feature type="turn" evidence="5">
    <location>
        <begin position="409"/>
        <end position="411"/>
    </location>
</feature>
<feature type="strand" evidence="5">
    <location>
        <begin position="413"/>
        <end position="421"/>
    </location>
</feature>
<feature type="helix" evidence="5">
    <location>
        <begin position="424"/>
        <end position="436"/>
    </location>
</feature>
<feature type="helix" evidence="5">
    <location>
        <begin position="441"/>
        <end position="445"/>
    </location>
</feature>
<feature type="helix" evidence="5">
    <location>
        <begin position="455"/>
        <end position="465"/>
    </location>
</feature>
<evidence type="ECO:0000250" key="1"/>
<evidence type="ECO:0000269" key="2">
    <source>
    </source>
</evidence>
<evidence type="ECO:0000269" key="3">
    <source>
    </source>
</evidence>
<evidence type="ECO:0000305" key="4"/>
<evidence type="ECO:0007829" key="5">
    <source>
        <dbReference type="PDB" id="3LAD"/>
    </source>
</evidence>
<organism>
    <name type="scientific">Azotobacter vinelandii</name>
    <dbReference type="NCBI Taxonomy" id="354"/>
    <lineage>
        <taxon>Bacteria</taxon>
        <taxon>Pseudomonadati</taxon>
        <taxon>Pseudomonadota</taxon>
        <taxon>Gammaproteobacteria</taxon>
        <taxon>Pseudomonadales</taxon>
        <taxon>Pseudomonadaceae</taxon>
        <taxon>Azotobacter</taxon>
    </lineage>
</organism>